<comment type="function">
    <text evidence="2 9">On ligand binding, forms a receptor complex consisting of two type II and two type I transmembrane serine/threonine kinases. Type II receptors phosphorylate and activate type I receptors which autophosphorylate, then bind and activate SMAD transcription (By similarity). Positively regulates chondrocyte differentiation (PubMed:14523231, PubMed:24129431).</text>
</comment>
<comment type="catalytic activity">
    <reaction evidence="2">
        <text>L-threonyl-[receptor-protein] + ATP = O-phospho-L-threonyl-[receptor-protein] + ADP + H(+)</text>
        <dbReference type="Rhea" id="RHEA:44880"/>
        <dbReference type="Rhea" id="RHEA-COMP:11024"/>
        <dbReference type="Rhea" id="RHEA-COMP:11025"/>
        <dbReference type="ChEBI" id="CHEBI:15378"/>
        <dbReference type="ChEBI" id="CHEBI:30013"/>
        <dbReference type="ChEBI" id="CHEBI:30616"/>
        <dbReference type="ChEBI" id="CHEBI:61977"/>
        <dbReference type="ChEBI" id="CHEBI:456216"/>
        <dbReference type="EC" id="2.7.11.30"/>
    </reaction>
    <physiologicalReaction direction="left-to-right" evidence="2">
        <dbReference type="Rhea" id="RHEA:44881"/>
    </physiologicalReaction>
</comment>
<comment type="catalytic activity">
    <reaction evidence="2">
        <text>L-seryl-[receptor-protein] + ATP = O-phospho-L-seryl-[receptor-protein] + ADP + H(+)</text>
        <dbReference type="Rhea" id="RHEA:18673"/>
        <dbReference type="Rhea" id="RHEA-COMP:11022"/>
        <dbReference type="Rhea" id="RHEA-COMP:11023"/>
        <dbReference type="ChEBI" id="CHEBI:15378"/>
        <dbReference type="ChEBI" id="CHEBI:29999"/>
        <dbReference type="ChEBI" id="CHEBI:30616"/>
        <dbReference type="ChEBI" id="CHEBI:83421"/>
        <dbReference type="ChEBI" id="CHEBI:456216"/>
        <dbReference type="EC" id="2.7.11.30"/>
    </reaction>
    <physiologicalReaction direction="left-to-right" evidence="2">
        <dbReference type="Rhea" id="RHEA:18674"/>
    </physiologicalReaction>
</comment>
<comment type="cofactor">
    <cofactor evidence="1">
        <name>Mg(2+)</name>
        <dbReference type="ChEBI" id="CHEBI:18420"/>
    </cofactor>
    <cofactor evidence="1">
        <name>Mn(2+)</name>
        <dbReference type="ChEBI" id="CHEBI:29035"/>
    </cofactor>
</comment>
<comment type="subcellular location">
    <subcellularLocation>
        <location evidence="2">Cell membrane</location>
        <topology evidence="3">Single-pass type I membrane protein</topology>
    </subcellularLocation>
</comment>
<comment type="PTM">
    <text evidence="2">Autophosphorylated.</text>
</comment>
<comment type="similarity">
    <text evidence="10">Belongs to the protein kinase superfamily. TKL Ser/Thr protein kinase family. TGFB receptor subfamily.</text>
</comment>
<name>BMR1B_CHICK</name>
<reference key="1">
    <citation type="journal article" date="1993" name="DNA Seq.">
        <title>A new receptor protein kinase from chick embryo related to type II receptor for TGF-beta.</title>
        <authorList>
            <person name="Yamazaki Y."/>
            <person name="Saito T."/>
            <person name="Nohno T."/>
        </authorList>
    </citation>
    <scope>NUCLEOTIDE SEQUENCE [MRNA]</scope>
</reference>
<reference key="2">
    <citation type="journal article" date="2003" name="Proc. Natl. Acad. Sci. U.S.A.">
        <title>Mutations in bone morphogenetic protein receptor 1B cause brachydactyly type A2.</title>
        <authorList>
            <person name="Lehmann K."/>
            <person name="Seemann P."/>
            <person name="Stricker S."/>
            <person name="Sammar M."/>
            <person name="Meyer B."/>
            <person name="Suering K."/>
            <person name="Majewski F."/>
            <person name="Tinschert S."/>
            <person name="Grzeschik K.-H."/>
            <person name="Mueller D."/>
            <person name="Knaus P."/>
            <person name="Nuernberg P."/>
            <person name="Mundlos S."/>
        </authorList>
    </citation>
    <scope>MUTAGENESIS OF ILE-200 AND ARG-486</scope>
    <scope>FUNCTION</scope>
</reference>
<reference key="3">
    <citation type="journal article" date="2014" name="Eur. J. Hum. Genet.">
        <title>Homozygous missense and nonsense mutations in BMPR1B cause acromesomelic chondrodysplasia-type Grebe.</title>
        <authorList>
            <person name="Graul-Neumann L.M."/>
            <person name="Deichsel A."/>
            <person name="Wille U."/>
            <person name="Kakar N."/>
            <person name="Koll R."/>
            <person name="Bassir C."/>
            <person name="Ahmad J."/>
            <person name="Cormier-Daire V."/>
            <person name="Mundlos S."/>
            <person name="Kubisch C."/>
            <person name="Borck G."/>
            <person name="Klopocki E."/>
            <person name="Mueller T.D."/>
            <person name="Doelken S.C."/>
            <person name="Seemann P."/>
        </authorList>
    </citation>
    <scope>FUNCTION</scope>
</reference>
<protein>
    <recommendedName>
        <fullName>Bone morphogenetic protein receptor type-1B</fullName>
        <shortName>BMP type-1B receptor</shortName>
        <shortName>BMPR-1B</shortName>
        <ecNumber evidence="2">2.7.11.30</ecNumber>
    </recommendedName>
    <alternativeName>
        <fullName>Activin receptor-like kinase 6</fullName>
        <shortName>ALK-6</shortName>
    </alternativeName>
    <alternativeName>
        <fullName>RPK-1</fullName>
    </alternativeName>
    <alternativeName>
        <fullName>Serine/threonine-protein kinase receptor R6</fullName>
        <shortName>SKR6</shortName>
    </alternativeName>
</protein>
<sequence length="502" mass="56766">MPLLSSSKLSMESRKEDSEGTAPAPPQKKLSCQCHHHCPEDSVNSTCSTDGYCFTIIEEDDSGGHLVTKGCLGLEGSDFQCRDTPIPHQRRSIECCTGQDYCNKHLHPTLPPLKNRDFAEGNIHHKALLISVTVCSILLVLIIIFCYFRYKRQEARPRYSIGLEQDETYIPPGESLKDLIEQSQSSGSGSGLPLLVQRTIAKQIQMVKQIGKGRYGEVWMGKWRGEKVAVKVFFTTEEASWFRETEIYQTVLMRHENILGFIAADIKGTGSWTQLYLITDYHENGSLYDYLKSTTLDTKGMLKLAYSSVSGLCHLHTGIFSTQGKPAIAHRDLKSKNILVKKNGTCCIADLGLAVKFISDTNEVDIPPNTRVGTKRYMPPEVLDESLNRNHFQSYIMADMYSFGLILWEIARRCVSGGIVEEYQLPYHDLVPSDPSYEDMREIVCIKRLRPSFPNRWSSDECLRQMGKLMMECWAHNPASRLTALRVKKTLAKMSESQDIKL</sequence>
<dbReference type="EC" id="2.7.11.30" evidence="2"/>
<dbReference type="EMBL" id="D13432">
    <property type="protein sequence ID" value="BAA02694.1"/>
    <property type="molecule type" value="mRNA"/>
</dbReference>
<dbReference type="PIR" id="A56683">
    <property type="entry name" value="A56683"/>
</dbReference>
<dbReference type="RefSeq" id="NP_990463.1">
    <property type="nucleotide sequence ID" value="NM_205132.1"/>
</dbReference>
<dbReference type="SMR" id="Q05438"/>
<dbReference type="DIP" id="DIP-5822N"/>
<dbReference type="FunCoup" id="Q05438">
    <property type="interactions" value="166"/>
</dbReference>
<dbReference type="STRING" id="9031.ENSGALP00000036862"/>
<dbReference type="GlyCosmos" id="Q05438">
    <property type="glycosylation" value="1 site, No reported glycans"/>
</dbReference>
<dbReference type="GlyGen" id="Q05438">
    <property type="glycosylation" value="1 site"/>
</dbReference>
<dbReference type="PaxDb" id="9031-ENSGALP00000019925"/>
<dbReference type="GeneID" id="396030"/>
<dbReference type="KEGG" id="gga:396030"/>
<dbReference type="CTD" id="658"/>
<dbReference type="VEuPathDB" id="HostDB:geneid_396030"/>
<dbReference type="eggNOG" id="KOG2052">
    <property type="taxonomic scope" value="Eukaryota"/>
</dbReference>
<dbReference type="InParanoid" id="Q05438"/>
<dbReference type="OrthoDB" id="69842at2759"/>
<dbReference type="PhylomeDB" id="Q05438"/>
<dbReference type="BRENDA" id="2.7.10.2">
    <property type="organism ID" value="1306"/>
</dbReference>
<dbReference type="PRO" id="PR:Q05438"/>
<dbReference type="Proteomes" id="UP000000539">
    <property type="component" value="Unassembled WGS sequence"/>
</dbReference>
<dbReference type="GO" id="GO:0005886">
    <property type="term" value="C:plasma membrane"/>
    <property type="evidence" value="ECO:0000250"/>
    <property type="project" value="UniProtKB"/>
</dbReference>
<dbReference type="GO" id="GO:0043235">
    <property type="term" value="C:receptor complex"/>
    <property type="evidence" value="ECO:0000318"/>
    <property type="project" value="GO_Central"/>
</dbReference>
<dbReference type="GO" id="GO:0005524">
    <property type="term" value="F:ATP binding"/>
    <property type="evidence" value="ECO:0007669"/>
    <property type="project" value="UniProtKB-KW"/>
</dbReference>
<dbReference type="GO" id="GO:0046872">
    <property type="term" value="F:metal ion binding"/>
    <property type="evidence" value="ECO:0007669"/>
    <property type="project" value="UniProtKB-KW"/>
</dbReference>
<dbReference type="GO" id="GO:0005025">
    <property type="term" value="F:transforming growth factor beta receptor activity, type I"/>
    <property type="evidence" value="ECO:0000318"/>
    <property type="project" value="GO_Central"/>
</dbReference>
<dbReference type="GO" id="GO:0030509">
    <property type="term" value="P:BMP signaling pathway"/>
    <property type="evidence" value="ECO:0000250"/>
    <property type="project" value="UniProtKB"/>
</dbReference>
<dbReference type="GO" id="GO:0001502">
    <property type="term" value="P:cartilage condensation"/>
    <property type="evidence" value="ECO:0000303"/>
    <property type="project" value="UniProtKB"/>
</dbReference>
<dbReference type="GO" id="GO:0030154">
    <property type="term" value="P:cell differentiation"/>
    <property type="evidence" value="ECO:0000318"/>
    <property type="project" value="GO_Central"/>
</dbReference>
<dbReference type="GO" id="GO:0071363">
    <property type="term" value="P:cellular response to growth factor stimulus"/>
    <property type="evidence" value="ECO:0000250"/>
    <property type="project" value="UniProtKB"/>
</dbReference>
<dbReference type="GO" id="GO:0002063">
    <property type="term" value="P:chondrocyte development"/>
    <property type="evidence" value="ECO:0000315"/>
    <property type="project" value="AgBase"/>
</dbReference>
<dbReference type="GO" id="GO:0009953">
    <property type="term" value="P:dorsal/ventral pattern formation"/>
    <property type="evidence" value="ECO:0000318"/>
    <property type="project" value="GO_Central"/>
</dbReference>
<dbReference type="GO" id="GO:0060350">
    <property type="term" value="P:endochondral bone morphogenesis"/>
    <property type="evidence" value="ECO:0000315"/>
    <property type="project" value="AgBase"/>
</dbReference>
<dbReference type="GO" id="GO:0035108">
    <property type="term" value="P:limb morphogenesis"/>
    <property type="evidence" value="ECO:0000315"/>
    <property type="project" value="UniProtKB"/>
</dbReference>
<dbReference type="GO" id="GO:1902731">
    <property type="term" value="P:negative regulation of chondrocyte proliferation"/>
    <property type="evidence" value="ECO:0000315"/>
    <property type="project" value="AgBase"/>
</dbReference>
<dbReference type="GO" id="GO:0061036">
    <property type="term" value="P:positive regulation of cartilage development"/>
    <property type="evidence" value="ECO:0000315"/>
    <property type="project" value="AgBase"/>
</dbReference>
<dbReference type="GO" id="GO:0045597">
    <property type="term" value="P:positive regulation of cell differentiation"/>
    <property type="evidence" value="ECO:0000315"/>
    <property type="project" value="UniProtKB"/>
</dbReference>
<dbReference type="GO" id="GO:0032332">
    <property type="term" value="P:positive regulation of chondrocyte differentiation"/>
    <property type="evidence" value="ECO:0000314"/>
    <property type="project" value="UniProtKB"/>
</dbReference>
<dbReference type="GO" id="GO:0030166">
    <property type="term" value="P:proteoglycan biosynthetic process"/>
    <property type="evidence" value="ECO:0000315"/>
    <property type="project" value="AgBase"/>
</dbReference>
<dbReference type="GO" id="GO:0001501">
    <property type="term" value="P:skeletal system development"/>
    <property type="evidence" value="ECO:0000315"/>
    <property type="project" value="UniProtKB"/>
</dbReference>
<dbReference type="CDD" id="cd14219">
    <property type="entry name" value="STKc_BMPR1b"/>
    <property type="match status" value="1"/>
</dbReference>
<dbReference type="CDD" id="cd23613">
    <property type="entry name" value="TFP_LU_ECD_BMPR1B"/>
    <property type="match status" value="1"/>
</dbReference>
<dbReference type="FunFam" id="1.10.510.10:FF:000018">
    <property type="entry name" value="Receptor protein serine/threonine kinase"/>
    <property type="match status" value="1"/>
</dbReference>
<dbReference type="FunFam" id="2.10.60.10:FF:000001">
    <property type="entry name" value="Receptor protein serine/threonine kinase"/>
    <property type="match status" value="1"/>
</dbReference>
<dbReference type="FunFam" id="3.30.200.20:FF:000055">
    <property type="entry name" value="Receptor protein serine/threonine kinase"/>
    <property type="match status" value="1"/>
</dbReference>
<dbReference type="Gene3D" id="2.10.60.10">
    <property type="entry name" value="CD59"/>
    <property type="match status" value="1"/>
</dbReference>
<dbReference type="Gene3D" id="3.30.200.20">
    <property type="entry name" value="Phosphorylase Kinase, domain 1"/>
    <property type="match status" value="1"/>
</dbReference>
<dbReference type="Gene3D" id="1.10.510.10">
    <property type="entry name" value="Transferase(Phosphotransferase) domain 1"/>
    <property type="match status" value="1"/>
</dbReference>
<dbReference type="InterPro" id="IPR000472">
    <property type="entry name" value="Activin_recp"/>
</dbReference>
<dbReference type="InterPro" id="IPR003605">
    <property type="entry name" value="GS_dom"/>
</dbReference>
<dbReference type="InterPro" id="IPR011009">
    <property type="entry name" value="Kinase-like_dom_sf"/>
</dbReference>
<dbReference type="InterPro" id="IPR000719">
    <property type="entry name" value="Prot_kinase_dom"/>
</dbReference>
<dbReference type="InterPro" id="IPR017441">
    <property type="entry name" value="Protein_kinase_ATP_BS"/>
</dbReference>
<dbReference type="InterPro" id="IPR001245">
    <property type="entry name" value="Ser-Thr/Tyr_kinase_cat_dom"/>
</dbReference>
<dbReference type="InterPro" id="IPR008271">
    <property type="entry name" value="Ser/Thr_kinase_AS"/>
</dbReference>
<dbReference type="InterPro" id="IPR045860">
    <property type="entry name" value="Snake_toxin-like_sf"/>
</dbReference>
<dbReference type="InterPro" id="IPR000333">
    <property type="entry name" value="TGFB_receptor"/>
</dbReference>
<dbReference type="PANTHER" id="PTHR23255:SF62">
    <property type="entry name" value="BONE MORPHOGENETIC PROTEIN RECEPTOR TYPE-1B"/>
    <property type="match status" value="1"/>
</dbReference>
<dbReference type="PANTHER" id="PTHR23255">
    <property type="entry name" value="TRANSFORMING GROWTH FACTOR-BETA RECEPTOR TYPE I AND II"/>
    <property type="match status" value="1"/>
</dbReference>
<dbReference type="Pfam" id="PF01064">
    <property type="entry name" value="Activin_recp"/>
    <property type="match status" value="1"/>
</dbReference>
<dbReference type="Pfam" id="PF07714">
    <property type="entry name" value="PK_Tyr_Ser-Thr"/>
    <property type="match status" value="1"/>
</dbReference>
<dbReference type="Pfam" id="PF08515">
    <property type="entry name" value="TGF_beta_GS"/>
    <property type="match status" value="1"/>
</dbReference>
<dbReference type="SMART" id="SM00467">
    <property type="entry name" value="GS"/>
    <property type="match status" value="1"/>
</dbReference>
<dbReference type="SMART" id="SM00220">
    <property type="entry name" value="S_TKc"/>
    <property type="match status" value="1"/>
</dbReference>
<dbReference type="SUPFAM" id="SSF56112">
    <property type="entry name" value="Protein kinase-like (PK-like)"/>
    <property type="match status" value="1"/>
</dbReference>
<dbReference type="SUPFAM" id="SSF57302">
    <property type="entry name" value="Snake toxin-like"/>
    <property type="match status" value="1"/>
</dbReference>
<dbReference type="PROSITE" id="PS51256">
    <property type="entry name" value="GS"/>
    <property type="match status" value="1"/>
</dbReference>
<dbReference type="PROSITE" id="PS00107">
    <property type="entry name" value="PROTEIN_KINASE_ATP"/>
    <property type="match status" value="1"/>
</dbReference>
<dbReference type="PROSITE" id="PS50011">
    <property type="entry name" value="PROTEIN_KINASE_DOM"/>
    <property type="match status" value="1"/>
</dbReference>
<dbReference type="PROSITE" id="PS00108">
    <property type="entry name" value="PROTEIN_KINASE_ST"/>
    <property type="match status" value="1"/>
</dbReference>
<keyword id="KW-0067">ATP-binding</keyword>
<keyword id="KW-1003">Cell membrane</keyword>
<keyword id="KW-0891">Chondrogenesis</keyword>
<keyword id="KW-1015">Disulfide bond</keyword>
<keyword id="KW-0325">Glycoprotein</keyword>
<keyword id="KW-0418">Kinase</keyword>
<keyword id="KW-0460">Magnesium</keyword>
<keyword id="KW-0464">Manganese</keyword>
<keyword id="KW-0472">Membrane</keyword>
<keyword id="KW-0479">Metal-binding</keyword>
<keyword id="KW-0547">Nucleotide-binding</keyword>
<keyword id="KW-0675">Receptor</keyword>
<keyword id="KW-1185">Reference proteome</keyword>
<keyword id="KW-0723">Serine/threonine-protein kinase</keyword>
<keyword id="KW-0732">Signal</keyword>
<keyword id="KW-0808">Transferase</keyword>
<keyword id="KW-0812">Transmembrane</keyword>
<keyword id="KW-1133">Transmembrane helix</keyword>
<evidence type="ECO:0000250" key="1"/>
<evidence type="ECO:0000250" key="2">
    <source>
        <dbReference type="UniProtKB" id="P36898"/>
    </source>
</evidence>
<evidence type="ECO:0000255" key="3"/>
<evidence type="ECO:0000255" key="4">
    <source>
        <dbReference type="PROSITE-ProRule" id="PRU00159"/>
    </source>
</evidence>
<evidence type="ECO:0000255" key="5">
    <source>
        <dbReference type="PROSITE-ProRule" id="PRU00585"/>
    </source>
</evidence>
<evidence type="ECO:0000255" key="6">
    <source>
        <dbReference type="PROSITE-ProRule" id="PRU10027"/>
    </source>
</evidence>
<evidence type="ECO:0000256" key="7">
    <source>
        <dbReference type="SAM" id="MobiDB-lite"/>
    </source>
</evidence>
<evidence type="ECO:0000269" key="8">
    <source>
    </source>
</evidence>
<evidence type="ECO:0000269" key="9">
    <source>
    </source>
</evidence>
<evidence type="ECO:0000305" key="10"/>
<gene>
    <name type="primary">BMPR1B</name>
</gene>
<organism>
    <name type="scientific">Gallus gallus</name>
    <name type="common">Chicken</name>
    <dbReference type="NCBI Taxonomy" id="9031"/>
    <lineage>
        <taxon>Eukaryota</taxon>
        <taxon>Metazoa</taxon>
        <taxon>Chordata</taxon>
        <taxon>Craniata</taxon>
        <taxon>Vertebrata</taxon>
        <taxon>Euteleostomi</taxon>
        <taxon>Archelosauria</taxon>
        <taxon>Archosauria</taxon>
        <taxon>Dinosauria</taxon>
        <taxon>Saurischia</taxon>
        <taxon>Theropoda</taxon>
        <taxon>Coelurosauria</taxon>
        <taxon>Aves</taxon>
        <taxon>Neognathae</taxon>
        <taxon>Galloanserae</taxon>
        <taxon>Galliformes</taxon>
        <taxon>Phasianidae</taxon>
        <taxon>Phasianinae</taxon>
        <taxon>Gallus</taxon>
    </lineage>
</organism>
<accession>Q05438</accession>
<feature type="signal peptide" evidence="3">
    <location>
        <begin position="1"/>
        <end position="13"/>
    </location>
</feature>
<feature type="chain" id="PRO_0000024414" description="Bone morphogenetic protein receptor type-1B">
    <location>
        <begin position="14"/>
        <end position="502"/>
    </location>
</feature>
<feature type="topological domain" description="Extracellular" evidence="3">
    <location>
        <begin position="14"/>
        <end position="126"/>
    </location>
</feature>
<feature type="transmembrane region" description="Helical" evidence="3">
    <location>
        <begin position="127"/>
        <end position="148"/>
    </location>
</feature>
<feature type="topological domain" description="Cytoplasmic" evidence="3">
    <location>
        <begin position="149"/>
        <end position="502"/>
    </location>
</feature>
<feature type="domain" description="GS" evidence="5">
    <location>
        <begin position="174"/>
        <end position="203"/>
    </location>
</feature>
<feature type="domain" description="Protein kinase" evidence="4">
    <location>
        <begin position="204"/>
        <end position="494"/>
    </location>
</feature>
<feature type="region of interest" description="Disordered" evidence="7">
    <location>
        <begin position="1"/>
        <end position="27"/>
    </location>
</feature>
<feature type="compositionally biased region" description="Polar residues" evidence="7">
    <location>
        <begin position="1"/>
        <end position="10"/>
    </location>
</feature>
<feature type="active site" description="Proton acceptor" evidence="4 6">
    <location>
        <position position="332"/>
    </location>
</feature>
<feature type="binding site" evidence="4">
    <location>
        <begin position="210"/>
        <end position="218"/>
    </location>
    <ligand>
        <name>ATP</name>
        <dbReference type="ChEBI" id="CHEBI:30616"/>
    </ligand>
</feature>
<feature type="binding site" evidence="4">
    <location>
        <position position="231"/>
    </location>
    <ligand>
        <name>ATP</name>
        <dbReference type="ChEBI" id="CHEBI:30616"/>
    </ligand>
</feature>
<feature type="glycosylation site" description="N-linked (GlcNAc...) asparagine" evidence="3">
    <location>
        <position position="44"/>
    </location>
</feature>
<feature type="disulfide bond" evidence="2">
    <location>
        <begin position="32"/>
        <end position="53"/>
    </location>
</feature>
<feature type="disulfide bond" evidence="2">
    <location>
        <begin position="34"/>
        <end position="38"/>
    </location>
</feature>
<feature type="disulfide bond" evidence="2">
    <location>
        <begin position="47"/>
        <end position="71"/>
    </location>
</feature>
<feature type="disulfide bond" evidence="2">
    <location>
        <begin position="81"/>
        <end position="95"/>
    </location>
</feature>
<feature type="disulfide bond" evidence="2">
    <location>
        <begin position="96"/>
        <end position="102"/>
    </location>
</feature>
<feature type="mutagenesis site" description="Loss of positive regulation of chondrocyte differentiation." evidence="8">
    <original>I</original>
    <variation>K</variation>
    <location>
        <position position="200"/>
    </location>
</feature>
<feature type="mutagenesis site" description="Strongly decreases positive regulation of chondrocyte differentiation." evidence="8">
    <original>R</original>
    <variation>W</variation>
    <location>
        <position position="486"/>
    </location>
</feature>
<proteinExistence type="evidence at protein level"/>